<evidence type="ECO:0000250" key="1">
    <source>
        <dbReference type="UniProtKB" id="Q60969"/>
    </source>
</evidence>
<evidence type="ECO:0000255" key="2">
    <source>
        <dbReference type="PROSITE-ProRule" id="PRU00160"/>
    </source>
</evidence>
<evidence type="ECO:0000256" key="3">
    <source>
        <dbReference type="SAM" id="MobiDB-lite"/>
    </source>
</evidence>
<evidence type="ECO:0000269" key="4">
    <source>
    </source>
</evidence>
<evidence type="ECO:0000269" key="5">
    <source>
    </source>
</evidence>
<evidence type="ECO:0000305" key="6"/>
<evidence type="ECO:0000305" key="7">
    <source>
    </source>
</evidence>
<evidence type="ECO:0000312" key="8">
    <source>
        <dbReference type="HGNC" id="HGNC:11447"/>
    </source>
</evidence>
<evidence type="ECO:0007744" key="9">
    <source>
    </source>
</evidence>
<evidence type="ECO:0007829" key="10">
    <source>
        <dbReference type="PDB" id="2R0B"/>
    </source>
</evidence>
<proteinExistence type="evidence at protein level"/>
<organism>
    <name type="scientific">Homo sapiens</name>
    <name type="common">Human</name>
    <dbReference type="NCBI Taxonomy" id="9606"/>
    <lineage>
        <taxon>Eukaryota</taxon>
        <taxon>Metazoa</taxon>
        <taxon>Chordata</taxon>
        <taxon>Craniata</taxon>
        <taxon>Vertebrata</taxon>
        <taxon>Euteleostomi</taxon>
        <taxon>Mammalia</taxon>
        <taxon>Eutheria</taxon>
        <taxon>Euarchontoglires</taxon>
        <taxon>Primates</taxon>
        <taxon>Haplorrhini</taxon>
        <taxon>Catarrhini</taxon>
        <taxon>Hominidae</taxon>
        <taxon>Homo</taxon>
    </lineage>
</organism>
<gene>
    <name evidence="8" type="primary">STYX</name>
</gene>
<dbReference type="EMBL" id="AK098195">
    <property type="protein sequence ID" value="BAC05259.1"/>
    <property type="molecule type" value="mRNA"/>
</dbReference>
<dbReference type="EMBL" id="CH471078">
    <property type="protein sequence ID" value="EAW65641.1"/>
    <property type="molecule type" value="Genomic_DNA"/>
</dbReference>
<dbReference type="EMBL" id="CH471078">
    <property type="protein sequence ID" value="EAW65644.1"/>
    <property type="molecule type" value="Genomic_DNA"/>
</dbReference>
<dbReference type="EMBL" id="CH471061">
    <property type="protein sequence ID" value="EAW80612.1"/>
    <property type="molecule type" value="Genomic_DNA"/>
</dbReference>
<dbReference type="EMBL" id="BC020265">
    <property type="protein sequence ID" value="AAH20265.1"/>
    <property type="molecule type" value="mRNA"/>
</dbReference>
<dbReference type="EMBL" id="BC146995">
    <property type="protein sequence ID" value="AAI46996.1"/>
    <property type="molecule type" value="mRNA"/>
</dbReference>
<dbReference type="EMBL" id="BC146998">
    <property type="protein sequence ID" value="AAI46999.1"/>
    <property type="molecule type" value="mRNA"/>
</dbReference>
<dbReference type="EMBL" id="U87169">
    <property type="protein sequence ID" value="AAB47561.1"/>
    <property type="molecule type" value="mRNA"/>
</dbReference>
<dbReference type="CCDS" id="CCDS9711.1"/>
<dbReference type="RefSeq" id="NP_001124173.1">
    <property type="nucleotide sequence ID" value="NM_001130701.2"/>
</dbReference>
<dbReference type="RefSeq" id="NP_660294.1">
    <property type="nucleotide sequence ID" value="NM_145251.4"/>
</dbReference>
<dbReference type="PDB" id="2R0B">
    <property type="method" value="X-ray"/>
    <property type="resolution" value="1.60 A"/>
    <property type="chains" value="A=26-177"/>
</dbReference>
<dbReference type="PDBsum" id="2R0B"/>
<dbReference type="SMR" id="Q8WUJ0"/>
<dbReference type="BioGRID" id="112684">
    <property type="interactions" value="86"/>
</dbReference>
<dbReference type="FunCoup" id="Q8WUJ0">
    <property type="interactions" value="2985"/>
</dbReference>
<dbReference type="IntAct" id="Q8WUJ0">
    <property type="interactions" value="58"/>
</dbReference>
<dbReference type="MINT" id="Q8WUJ0"/>
<dbReference type="STRING" id="9606.ENSP00000346599"/>
<dbReference type="DEPOD" id="STYX"/>
<dbReference type="GlyGen" id="Q8WUJ0">
    <property type="glycosylation" value="1 site, 1 O-linked glycan (1 site)"/>
</dbReference>
<dbReference type="iPTMnet" id="Q8WUJ0"/>
<dbReference type="PhosphoSitePlus" id="Q8WUJ0"/>
<dbReference type="BioMuta" id="STYX"/>
<dbReference type="DMDM" id="29840812"/>
<dbReference type="jPOST" id="Q8WUJ0"/>
<dbReference type="MassIVE" id="Q8WUJ0"/>
<dbReference type="PaxDb" id="9606-ENSP00000346599"/>
<dbReference type="PeptideAtlas" id="Q8WUJ0"/>
<dbReference type="ProteomicsDB" id="74688"/>
<dbReference type="Pumba" id="Q8WUJ0"/>
<dbReference type="Antibodypedia" id="23899">
    <property type="antibodies" value="52 antibodies from 15 providers"/>
</dbReference>
<dbReference type="DNASU" id="6815"/>
<dbReference type="Ensembl" id="ENST00000354586.5">
    <property type="protein sequence ID" value="ENSP00000346599.4"/>
    <property type="gene ID" value="ENSG00000198252.12"/>
</dbReference>
<dbReference type="Ensembl" id="ENST00000442123.6">
    <property type="protein sequence ID" value="ENSP00000403214.2"/>
    <property type="gene ID" value="ENSG00000198252.12"/>
</dbReference>
<dbReference type="GeneID" id="6815"/>
<dbReference type="KEGG" id="hsa:6815"/>
<dbReference type="MANE-Select" id="ENST00000354586.5">
    <property type="protein sequence ID" value="ENSP00000346599.4"/>
    <property type="RefSeq nucleotide sequence ID" value="NM_145251.4"/>
    <property type="RefSeq protein sequence ID" value="NP_660294.1"/>
</dbReference>
<dbReference type="UCSC" id="uc001xaa.4">
    <property type="organism name" value="human"/>
</dbReference>
<dbReference type="AGR" id="HGNC:11447"/>
<dbReference type="CTD" id="6815"/>
<dbReference type="DisGeNET" id="6815"/>
<dbReference type="GeneCards" id="STYX"/>
<dbReference type="HGNC" id="HGNC:11447">
    <property type="gene designation" value="STYX"/>
</dbReference>
<dbReference type="HPA" id="ENSG00000198252">
    <property type="expression patterns" value="Low tissue specificity"/>
</dbReference>
<dbReference type="MIM" id="615814">
    <property type="type" value="gene"/>
</dbReference>
<dbReference type="neXtProt" id="NX_Q8WUJ0"/>
<dbReference type="OpenTargets" id="ENSG00000198252"/>
<dbReference type="PharmGKB" id="PA36244"/>
<dbReference type="VEuPathDB" id="HostDB:ENSG00000198252"/>
<dbReference type="eggNOG" id="KOG1716">
    <property type="taxonomic scope" value="Eukaryota"/>
</dbReference>
<dbReference type="GeneTree" id="ENSGT00940000154859"/>
<dbReference type="HOGENOM" id="CLU_027074_7_1_1"/>
<dbReference type="InParanoid" id="Q8WUJ0"/>
<dbReference type="OMA" id="EWRYEMR"/>
<dbReference type="OrthoDB" id="426001at2759"/>
<dbReference type="PAN-GO" id="Q8WUJ0">
    <property type="GO annotations" value="6 GO annotations based on evolutionary models"/>
</dbReference>
<dbReference type="PhylomeDB" id="Q8WUJ0"/>
<dbReference type="TreeFam" id="TF350439"/>
<dbReference type="PathwayCommons" id="Q8WUJ0"/>
<dbReference type="SignaLink" id="Q8WUJ0"/>
<dbReference type="SIGNOR" id="Q8WUJ0"/>
<dbReference type="BioGRID-ORCS" id="6815">
    <property type="hits" value="41 hits in 1161 CRISPR screens"/>
</dbReference>
<dbReference type="ChiTaRS" id="STYX">
    <property type="organism name" value="human"/>
</dbReference>
<dbReference type="EvolutionaryTrace" id="Q8WUJ0"/>
<dbReference type="GenomeRNAi" id="6815"/>
<dbReference type="Pharos" id="Q8WUJ0">
    <property type="development level" value="Tbio"/>
</dbReference>
<dbReference type="PRO" id="PR:Q8WUJ0"/>
<dbReference type="Proteomes" id="UP000005640">
    <property type="component" value="Chromosome 14"/>
</dbReference>
<dbReference type="RNAct" id="Q8WUJ0">
    <property type="molecule type" value="protein"/>
</dbReference>
<dbReference type="Bgee" id="ENSG00000198252">
    <property type="expression patterns" value="Expressed in superficial temporal artery and 194 other cell types or tissues"/>
</dbReference>
<dbReference type="ExpressionAtlas" id="Q8WUJ0">
    <property type="expression patterns" value="baseline and differential"/>
</dbReference>
<dbReference type="GO" id="GO:0005737">
    <property type="term" value="C:cytoplasm"/>
    <property type="evidence" value="ECO:0000314"/>
    <property type="project" value="UniProtKB"/>
</dbReference>
<dbReference type="GO" id="GO:0005829">
    <property type="term" value="C:cytosol"/>
    <property type="evidence" value="ECO:0007669"/>
    <property type="project" value="UniProtKB-SubCell"/>
</dbReference>
<dbReference type="GO" id="GO:0005654">
    <property type="term" value="C:nucleoplasm"/>
    <property type="evidence" value="ECO:0000314"/>
    <property type="project" value="HPA"/>
</dbReference>
<dbReference type="GO" id="GO:0005634">
    <property type="term" value="C:nucleus"/>
    <property type="evidence" value="ECO:0000314"/>
    <property type="project" value="UniProtKB"/>
</dbReference>
<dbReference type="GO" id="GO:1990444">
    <property type="term" value="F:F-box domain binding"/>
    <property type="evidence" value="ECO:0000315"/>
    <property type="project" value="UniProtKB"/>
</dbReference>
<dbReference type="GO" id="GO:0001691">
    <property type="term" value="F:pseudophosphatase activity"/>
    <property type="evidence" value="ECO:0000315"/>
    <property type="project" value="UniProtKB"/>
</dbReference>
<dbReference type="GO" id="GO:0032091">
    <property type="term" value="P:negative regulation of protein binding"/>
    <property type="evidence" value="ECO:0000314"/>
    <property type="project" value="UniProtKB"/>
</dbReference>
<dbReference type="GO" id="GO:0062026">
    <property type="term" value="P:negative regulation of SCF-dependent proteasomal ubiquitin-dependent catabolic process"/>
    <property type="evidence" value="ECO:0000315"/>
    <property type="project" value="UniProtKB"/>
</dbReference>
<dbReference type="GO" id="GO:0070372">
    <property type="term" value="P:regulation of ERK1 and ERK2 cascade"/>
    <property type="evidence" value="ECO:0000315"/>
    <property type="project" value="UniProtKB"/>
</dbReference>
<dbReference type="CDD" id="cd14522">
    <property type="entry name" value="DSP_STYX"/>
    <property type="match status" value="1"/>
</dbReference>
<dbReference type="FunFam" id="3.90.190.10:FF:000036">
    <property type="entry name" value="Serine/threonine/tyrosine-interacting protein a"/>
    <property type="match status" value="1"/>
</dbReference>
<dbReference type="Gene3D" id="3.90.190.10">
    <property type="entry name" value="Protein tyrosine phosphatase superfamily"/>
    <property type="match status" value="1"/>
</dbReference>
<dbReference type="InterPro" id="IPR000340">
    <property type="entry name" value="Dual-sp_phosphatase_cat-dom"/>
</dbReference>
<dbReference type="InterPro" id="IPR029021">
    <property type="entry name" value="Prot-tyrosine_phosphatase-like"/>
</dbReference>
<dbReference type="InterPro" id="IPR052449">
    <property type="entry name" value="STYX-Interacting_Phosphatase"/>
</dbReference>
<dbReference type="InterPro" id="IPR000387">
    <property type="entry name" value="Tyr_Pase_dom"/>
</dbReference>
<dbReference type="InterPro" id="IPR020422">
    <property type="entry name" value="TYR_PHOSPHATASE_DUAL_dom"/>
</dbReference>
<dbReference type="PANTHER" id="PTHR46588">
    <property type="entry name" value="SERINE/THREONINE/TYROSINE-INTERACTING PROTEIN"/>
    <property type="match status" value="1"/>
</dbReference>
<dbReference type="PANTHER" id="PTHR46588:SF1">
    <property type="entry name" value="SERINE_THREONINE_TYROSINE-INTERACTING PROTEIN"/>
    <property type="match status" value="1"/>
</dbReference>
<dbReference type="Pfam" id="PF00782">
    <property type="entry name" value="DSPc"/>
    <property type="match status" value="1"/>
</dbReference>
<dbReference type="SMART" id="SM00195">
    <property type="entry name" value="DSPc"/>
    <property type="match status" value="1"/>
</dbReference>
<dbReference type="SUPFAM" id="SSF52799">
    <property type="entry name" value="(Phosphotyrosine protein) phosphatases II"/>
    <property type="match status" value="1"/>
</dbReference>
<dbReference type="PROSITE" id="PS50056">
    <property type="entry name" value="TYR_PHOSPHATASE_2"/>
    <property type="match status" value="1"/>
</dbReference>
<dbReference type="PROSITE" id="PS50054">
    <property type="entry name" value="TYR_PHOSPHATASE_DUAL"/>
    <property type="match status" value="1"/>
</dbReference>
<keyword id="KW-0002">3D-structure</keyword>
<keyword id="KW-0963">Cytoplasm</keyword>
<keyword id="KW-0539">Nucleus</keyword>
<keyword id="KW-0597">Phosphoprotein</keyword>
<keyword id="KW-1267">Proteomics identification</keyword>
<keyword id="KW-1185">Reference proteome</keyword>
<reference key="1">
    <citation type="journal article" date="2004" name="Nat. Genet.">
        <title>Complete sequencing and characterization of 21,243 full-length human cDNAs.</title>
        <authorList>
            <person name="Ota T."/>
            <person name="Suzuki Y."/>
            <person name="Nishikawa T."/>
            <person name="Otsuki T."/>
            <person name="Sugiyama T."/>
            <person name="Irie R."/>
            <person name="Wakamatsu A."/>
            <person name="Hayashi K."/>
            <person name="Sato H."/>
            <person name="Nagai K."/>
            <person name="Kimura K."/>
            <person name="Makita H."/>
            <person name="Sekine M."/>
            <person name="Obayashi M."/>
            <person name="Nishi T."/>
            <person name="Shibahara T."/>
            <person name="Tanaka T."/>
            <person name="Ishii S."/>
            <person name="Yamamoto J."/>
            <person name="Saito K."/>
            <person name="Kawai Y."/>
            <person name="Isono Y."/>
            <person name="Nakamura Y."/>
            <person name="Nagahari K."/>
            <person name="Murakami K."/>
            <person name="Yasuda T."/>
            <person name="Iwayanagi T."/>
            <person name="Wagatsuma M."/>
            <person name="Shiratori A."/>
            <person name="Sudo H."/>
            <person name="Hosoiri T."/>
            <person name="Kaku Y."/>
            <person name="Kodaira H."/>
            <person name="Kondo H."/>
            <person name="Sugawara M."/>
            <person name="Takahashi M."/>
            <person name="Kanda K."/>
            <person name="Yokoi T."/>
            <person name="Furuya T."/>
            <person name="Kikkawa E."/>
            <person name="Omura Y."/>
            <person name="Abe K."/>
            <person name="Kamihara K."/>
            <person name="Katsuta N."/>
            <person name="Sato K."/>
            <person name="Tanikawa M."/>
            <person name="Yamazaki M."/>
            <person name="Ninomiya K."/>
            <person name="Ishibashi T."/>
            <person name="Yamashita H."/>
            <person name="Murakawa K."/>
            <person name="Fujimori K."/>
            <person name="Tanai H."/>
            <person name="Kimata M."/>
            <person name="Watanabe M."/>
            <person name="Hiraoka S."/>
            <person name="Chiba Y."/>
            <person name="Ishida S."/>
            <person name="Ono Y."/>
            <person name="Takiguchi S."/>
            <person name="Watanabe S."/>
            <person name="Yosida M."/>
            <person name="Hotuta T."/>
            <person name="Kusano J."/>
            <person name="Kanehori K."/>
            <person name="Takahashi-Fujii A."/>
            <person name="Hara H."/>
            <person name="Tanase T.-O."/>
            <person name="Nomura Y."/>
            <person name="Togiya S."/>
            <person name="Komai F."/>
            <person name="Hara R."/>
            <person name="Takeuchi K."/>
            <person name="Arita M."/>
            <person name="Imose N."/>
            <person name="Musashino K."/>
            <person name="Yuuki H."/>
            <person name="Oshima A."/>
            <person name="Sasaki N."/>
            <person name="Aotsuka S."/>
            <person name="Yoshikawa Y."/>
            <person name="Matsunawa H."/>
            <person name="Ichihara T."/>
            <person name="Shiohata N."/>
            <person name="Sano S."/>
            <person name="Moriya S."/>
            <person name="Momiyama H."/>
            <person name="Satoh N."/>
            <person name="Takami S."/>
            <person name="Terashima Y."/>
            <person name="Suzuki O."/>
            <person name="Nakagawa S."/>
            <person name="Senoh A."/>
            <person name="Mizoguchi H."/>
            <person name="Goto Y."/>
            <person name="Shimizu F."/>
            <person name="Wakebe H."/>
            <person name="Hishigaki H."/>
            <person name="Watanabe T."/>
            <person name="Sugiyama A."/>
            <person name="Takemoto M."/>
            <person name="Kawakami B."/>
            <person name="Yamazaki M."/>
            <person name="Watanabe K."/>
            <person name="Kumagai A."/>
            <person name="Itakura S."/>
            <person name="Fukuzumi Y."/>
            <person name="Fujimori Y."/>
            <person name="Komiyama M."/>
            <person name="Tashiro H."/>
            <person name="Tanigami A."/>
            <person name="Fujiwara T."/>
            <person name="Ono T."/>
            <person name="Yamada K."/>
            <person name="Fujii Y."/>
            <person name="Ozaki K."/>
            <person name="Hirao M."/>
            <person name="Ohmori Y."/>
            <person name="Kawabata A."/>
            <person name="Hikiji T."/>
            <person name="Kobatake N."/>
            <person name="Inagaki H."/>
            <person name="Ikema Y."/>
            <person name="Okamoto S."/>
            <person name="Okitani R."/>
            <person name="Kawakami T."/>
            <person name="Noguchi S."/>
            <person name="Itoh T."/>
            <person name="Shigeta K."/>
            <person name="Senba T."/>
            <person name="Matsumura K."/>
            <person name="Nakajima Y."/>
            <person name="Mizuno T."/>
            <person name="Morinaga M."/>
            <person name="Sasaki M."/>
            <person name="Togashi T."/>
            <person name="Oyama M."/>
            <person name="Hata H."/>
            <person name="Watanabe M."/>
            <person name="Komatsu T."/>
            <person name="Mizushima-Sugano J."/>
            <person name="Satoh T."/>
            <person name="Shirai Y."/>
            <person name="Takahashi Y."/>
            <person name="Nakagawa K."/>
            <person name="Okumura K."/>
            <person name="Nagase T."/>
            <person name="Nomura N."/>
            <person name="Kikuchi H."/>
            <person name="Masuho Y."/>
            <person name="Yamashita R."/>
            <person name="Nakai K."/>
            <person name="Yada T."/>
            <person name="Nakamura Y."/>
            <person name="Ohara O."/>
            <person name="Isogai T."/>
            <person name="Sugano S."/>
        </authorList>
    </citation>
    <scope>NUCLEOTIDE SEQUENCE [LARGE SCALE MRNA]</scope>
    <source>
        <tissue>Umbilical vein endothelial cell</tissue>
    </source>
</reference>
<reference key="2">
    <citation type="submission" date="2005-09" db="EMBL/GenBank/DDBJ databases">
        <authorList>
            <person name="Mural R.J."/>
            <person name="Istrail S."/>
            <person name="Sutton G."/>
            <person name="Florea L."/>
            <person name="Halpern A.L."/>
            <person name="Mobarry C.M."/>
            <person name="Lippert R."/>
            <person name="Walenz B."/>
            <person name="Shatkay H."/>
            <person name="Dew I."/>
            <person name="Miller J.R."/>
            <person name="Flanigan M.J."/>
            <person name="Edwards N.J."/>
            <person name="Bolanos R."/>
            <person name="Fasulo D."/>
            <person name="Halldorsson B.V."/>
            <person name="Hannenhalli S."/>
            <person name="Turner R."/>
            <person name="Yooseph S."/>
            <person name="Lu F."/>
            <person name="Nusskern D.R."/>
            <person name="Shue B.C."/>
            <person name="Zheng X.H."/>
            <person name="Zhong F."/>
            <person name="Delcher A.L."/>
            <person name="Huson D.H."/>
            <person name="Kravitz S.A."/>
            <person name="Mouchard L."/>
            <person name="Reinert K."/>
            <person name="Remington K.A."/>
            <person name="Clark A.G."/>
            <person name="Waterman M.S."/>
            <person name="Eichler E.E."/>
            <person name="Adams M.D."/>
            <person name="Hunkapiller M.W."/>
            <person name="Myers E.W."/>
            <person name="Venter J.C."/>
        </authorList>
    </citation>
    <scope>NUCLEOTIDE SEQUENCE [LARGE SCALE GENOMIC DNA]</scope>
</reference>
<reference key="3">
    <citation type="journal article" date="2004" name="Genome Res.">
        <title>The status, quality, and expansion of the NIH full-length cDNA project: the Mammalian Gene Collection (MGC).</title>
        <authorList>
            <consortium name="The MGC Project Team"/>
        </authorList>
    </citation>
    <scope>NUCLEOTIDE SEQUENCE [LARGE SCALE MRNA]</scope>
    <source>
        <tissue>Skin</tissue>
    </source>
</reference>
<reference key="4">
    <citation type="journal article" date="1997" name="Recept. Signal Transduct.">
        <title>Multiple phosphotyrosine phosphatase mRNAs are expressed in the human lung fibroblast cell line WI-38.</title>
        <authorList>
            <person name="Dayton M.A."/>
            <person name="Knobloch T.J."/>
        </authorList>
    </citation>
    <scope>NUCLEOTIDE SEQUENCE [MRNA] OF 116-181</scope>
    <source>
        <tissue>Lung</tissue>
    </source>
</reference>
<reference key="5">
    <citation type="journal article" date="2013" name="J. Proteome Res.">
        <title>Toward a comprehensive characterization of a human cancer cell phosphoproteome.</title>
        <authorList>
            <person name="Zhou H."/>
            <person name="Di Palma S."/>
            <person name="Preisinger C."/>
            <person name="Peng M."/>
            <person name="Polat A.N."/>
            <person name="Heck A.J."/>
            <person name="Mohammed S."/>
        </authorList>
    </citation>
    <scope>PHOSPHORYLATION [LARGE SCALE ANALYSIS] AT SER-184; SER-193 AND SER-201</scope>
    <scope>IDENTIFICATION BY MASS SPECTROMETRY [LARGE SCALE ANALYSIS]</scope>
    <source>
        <tissue>Cervix carcinoma</tissue>
        <tissue>Erythroleukemia</tissue>
    </source>
</reference>
<reference key="6">
    <citation type="journal article" date="2013" name="Proc. Natl. Acad. Sci. U.S.A.">
        <title>Pseudophosphatase STYX modulates cell-fate decisions and cell migration by spatiotemporal regulation of ERK1/2.</title>
        <authorList>
            <person name="Reiterer V."/>
            <person name="Fey D."/>
            <person name="Kolch W."/>
            <person name="Kholodenko B.N."/>
            <person name="Farhan H."/>
        </authorList>
    </citation>
    <scope>FUNCTION</scope>
    <scope>LACK OF CATALYTIC ACTIVITY</scope>
    <scope>INTERACTION WITH MAPK1</scope>
    <scope>SUBCELLULAR LOCATION</scope>
    <scope>MUTAGENESIS OF GLY-120</scope>
</reference>
<reference key="7">
    <citation type="journal article" date="2017" name="EMBO J.">
        <title>The pseudophosphatase STYX targets the F-box of FBXW7 and inhibits SCFFBXW7 function.</title>
        <authorList>
            <person name="Reiterer V."/>
            <person name="Figueras-Puig C."/>
            <person name="Le Guerroue F."/>
            <person name="Confalonieri S."/>
            <person name="Vecchi M."/>
            <person name="Jalapothu D."/>
            <person name="Kanse S.M."/>
            <person name="Deshaies R.J."/>
            <person name="Di Fiore P.P."/>
            <person name="Behrends C."/>
            <person name="Farhan H."/>
        </authorList>
    </citation>
    <scope>FUNCTION</scope>
    <scope>INTERACTION WITH FBXW7 AND MAPK1</scope>
    <scope>SUBCELLULAR LOCATION</scope>
    <scope>MOTIF</scope>
    <scope>MUTAGENESIS OF 76-PHE--GLN-78; GLY-120 AND 142-LYS--ARG-144</scope>
</reference>
<reference key="8">
    <citation type="journal article" date="2007" name="J. Struct. Funct. Genomics">
        <title>Structural genomics of protein phosphatases.</title>
        <authorList>
            <person name="Almo S.C."/>
            <person name="Bonanno J.B."/>
            <person name="Sauder J.M."/>
            <person name="Emtage S."/>
            <person name="Dilorenzo T.P."/>
            <person name="Malashkevich V."/>
            <person name="Wasserman S.R."/>
            <person name="Swaminathan S."/>
            <person name="Eswaramoorthy S."/>
            <person name="Agarwal R."/>
            <person name="Kumaran D."/>
            <person name="Madegowda M."/>
            <person name="Ragumani S."/>
            <person name="Patskovsky Y."/>
            <person name="Alvarado J."/>
            <person name="Ramagopal U.A."/>
            <person name="Faber-Barata J."/>
            <person name="Chance M.R."/>
            <person name="Sali A."/>
            <person name="Fiser A."/>
            <person name="Zhang Z.Y."/>
            <person name="Lawrence D.S."/>
            <person name="Burley S.K."/>
        </authorList>
    </citation>
    <scope>X-RAY CRYSTALLOGRAPHY (1.6 ANGSTROMS) OF 26-177</scope>
</reference>
<name>STYX_HUMAN</name>
<protein>
    <recommendedName>
        <fullName evidence="6">Serine/threonine/tyrosine-interacting protein</fullName>
    </recommendedName>
    <alternativeName>
        <fullName evidence="6">Inactive tyrosine-protein phosphatase STYX</fullName>
    </alternativeName>
    <alternativeName>
        <fullName evidence="1">Phosphoserine/threonine/tyrosine interaction protein</fullName>
    </alternativeName>
</protein>
<feature type="chain" id="PRO_0000094950" description="Serine/threonine/tyrosine-interacting protein">
    <location>
        <begin position="1"/>
        <end position="223"/>
    </location>
</feature>
<feature type="domain" description="Tyrosine-protein phosphatase" evidence="2">
    <location>
        <begin position="28"/>
        <end position="176"/>
    </location>
</feature>
<feature type="region of interest" description="Disordered" evidence="3">
    <location>
        <begin position="197"/>
        <end position="223"/>
    </location>
</feature>
<feature type="short sequence motif" description="Interaction with FBXW7" evidence="5">
    <location>
        <begin position="76"/>
        <end position="78"/>
    </location>
</feature>
<feature type="modified residue" description="Phosphoserine" evidence="9">
    <location>
        <position position="184"/>
    </location>
</feature>
<feature type="modified residue" description="Phosphoserine" evidence="9">
    <location>
        <position position="193"/>
    </location>
</feature>
<feature type="modified residue" description="Phosphoserine" evidence="9">
    <location>
        <position position="201"/>
    </location>
</feature>
<feature type="mutagenesis site" description="Loss of interaction with FBXW7. Does not affect interaction with MAPK1 and nuclear localization." evidence="5">
    <original>FQQ</original>
    <variation>AAA</variation>
    <location>
        <begin position="76"/>
        <end position="78"/>
    </location>
</feature>
<feature type="mutagenesis site" description="Confers phosphatase activity. Dephosphorylates MAPK1. Does not affect interaction with FBXW7 and nuclear localization." evidence="4 5">
    <original>G</original>
    <variation>C</variation>
    <location>
        <position position="120"/>
    </location>
</feature>
<feature type="mutagenesis site" description="Increases interaction with FBXW7." evidence="5">
    <original>KYR</original>
    <variation>AAA</variation>
    <location>
        <begin position="142"/>
        <end position="144"/>
    </location>
</feature>
<feature type="strand" evidence="10">
    <location>
        <begin position="30"/>
        <end position="33"/>
    </location>
</feature>
<feature type="strand" evidence="10">
    <location>
        <begin position="36"/>
        <end position="39"/>
    </location>
</feature>
<feature type="helix" evidence="10">
    <location>
        <begin position="41"/>
        <end position="44"/>
    </location>
</feature>
<feature type="helix" evidence="10">
    <location>
        <begin position="46"/>
        <end position="48"/>
    </location>
</feature>
<feature type="helix" evidence="10">
    <location>
        <begin position="49"/>
        <end position="54"/>
    </location>
</feature>
<feature type="strand" evidence="10">
    <location>
        <begin position="59"/>
        <end position="64"/>
    </location>
</feature>
<feature type="helix" evidence="10">
    <location>
        <begin position="66"/>
        <end position="68"/>
    </location>
</feature>
<feature type="turn" evidence="10">
    <location>
        <begin position="69"/>
        <end position="71"/>
    </location>
</feature>
<feature type="turn" evidence="10">
    <location>
        <begin position="77"/>
        <end position="79"/>
    </location>
</feature>
<feature type="strand" evidence="10">
    <location>
        <begin position="80"/>
        <end position="86"/>
    </location>
</feature>
<feature type="helix" evidence="10">
    <location>
        <begin position="96"/>
        <end position="98"/>
    </location>
</feature>
<feature type="helix" evidence="10">
    <location>
        <begin position="99"/>
        <end position="111"/>
    </location>
</feature>
<feature type="strand" evidence="10">
    <location>
        <begin position="116"/>
        <end position="119"/>
    </location>
</feature>
<feature type="strand" evidence="10">
    <location>
        <begin position="121"/>
        <end position="125"/>
    </location>
</feature>
<feature type="helix" evidence="10">
    <location>
        <begin position="126"/>
        <end position="139"/>
    </location>
</feature>
<feature type="helix" evidence="10">
    <location>
        <begin position="143"/>
        <end position="153"/>
    </location>
</feature>
<feature type="helix" evidence="10">
    <location>
        <begin position="161"/>
        <end position="175"/>
    </location>
</feature>
<comment type="function">
    <text evidence="1 4 5">Catalytically inactive phosphatase (PubMed:23847209). Acts as a nuclear anchor for MAPK1/MAPK3 (ERK1/ERK2) (PubMed:23847209). Modulates cell-fate decisions and cell migration by spatiotemporal regulation of MAPK1/MAPK3 (ERK1/ERK2) (PubMed:23847209). By binding to the F-box of FBXW7, prevents the assembly of FBXW7 into the SCF E3 ubiquitin-protein ligase complex, and thereby inhibits degradation of its substrates (PubMed:28007894). Plays a role in spermatogenesis (By similarity).</text>
</comment>
<comment type="subunit">
    <text evidence="1 4 5">Interacts with MAPK1; independently of MAPK1 phosphorylation status (PubMed:23847209). Interacts with CARHSP1/Crhsp-24 (By similarity). Interacts (via FQQ motif) with FBXW7 isoforms 1 (via F-box domain) and 3 (via F-box domain); the interaction is direct and prevents FBXW7 interaction with SKP1, a component of the SCF(FBXW7) complex (PubMed:28007894). Does not interact with FBXW7 isoform 2 (PubMed:28007894).</text>
</comment>
<comment type="interaction">
    <interactant intactId="EBI-20979851">
        <id>Q8WUJ0</id>
    </interactant>
    <interactant intactId="EBI-359574">
        <id>Q969H0</id>
        <label>FBXW7</label>
    </interactant>
    <organismsDiffer>false</organismsDiffer>
    <experiments>10</experiments>
</comment>
<comment type="interaction">
    <interactant intactId="EBI-20979851">
        <id>Q8WUJ0</id>
    </interactant>
    <interactant intactId="EBI-6162410">
        <id>Q969H0-1</id>
        <label>FBXW7</label>
    </interactant>
    <organismsDiffer>false</organismsDiffer>
    <experiments>4</experiments>
</comment>
<comment type="subcellular location">
    <subcellularLocation>
        <location evidence="4 5">Nucleus</location>
    </subcellularLocation>
    <subcellularLocation>
        <location evidence="4">Cytoplasm</location>
        <location evidence="4">Cytosol</location>
    </subcellularLocation>
    <text evidence="4 5">Predominantly localizes to the nucleus.</text>
</comment>
<comment type="similarity">
    <text evidence="6">Belongs to the protein-tyrosine phosphatase family. Non-receptor class subfamily.</text>
</comment>
<comment type="caution">
    <text evidence="4 7">Contains a Gly residue instead of a conserved Cys residue at position 120 in the dsPTPase catalytic loop which renders it catalytically inactive as a phosphatase. The binding pocket is however sufficiently preserved to bind phosphorylated substrates, and may protect them from phosphatases.</text>
</comment>
<sequence length="223" mass="25492">MEDVKLEFPSLPQCKEDAEEWTYPMRREMQEILPGLFLGPYSSAMKSKLPVLQKHGITHIICIRQNIEANFIKPNFQQLFRYLVLDIADNPVENIIRFFPMTKEFIDGSLQMGGKVLVHGNAGISRSAAFVIAYIMETFGMKYRDAFAYVQERRFCINPNAGFVHQLQEYEAIYLAKLTIQMMSPLQIERSLSVHSGTTGSLKRTHEEEDDFGTMQVATAQNG</sequence>
<accession>Q8WUJ0</accession>
<accession>B9EJG0</accession>
<accession>Q99850</accession>